<evidence type="ECO:0000255" key="1">
    <source>
        <dbReference type="HAMAP-Rule" id="MF_00102"/>
    </source>
</evidence>
<evidence type="ECO:0000305" key="2"/>
<keyword id="KW-0028">Amino-acid biosynthesis</keyword>
<keyword id="KW-0963">Cytoplasm</keyword>
<keyword id="KW-0220">Diaminopimelate biosynthesis</keyword>
<keyword id="KW-0457">Lysine biosynthesis</keyword>
<keyword id="KW-0520">NAD</keyword>
<keyword id="KW-0521">NADP</keyword>
<keyword id="KW-0560">Oxidoreductase</keyword>
<keyword id="KW-1185">Reference proteome</keyword>
<feature type="chain" id="PRO_0000228405" description="4-hydroxy-tetrahydrodipicolinate reductase">
    <location>
        <begin position="1"/>
        <end position="254"/>
    </location>
</feature>
<feature type="active site" description="Proton donor/acceptor" evidence="1">
    <location>
        <position position="143"/>
    </location>
</feature>
<feature type="active site" description="Proton donor" evidence="1">
    <location>
        <position position="147"/>
    </location>
</feature>
<feature type="binding site" evidence="1">
    <location>
        <begin position="13"/>
        <end position="18"/>
    </location>
    <ligand>
        <name>NAD(+)</name>
        <dbReference type="ChEBI" id="CHEBI:57540"/>
    </ligand>
</feature>
<feature type="binding site" evidence="1">
    <location>
        <position position="39"/>
    </location>
    <ligand>
        <name>NADP(+)</name>
        <dbReference type="ChEBI" id="CHEBI:58349"/>
    </ligand>
</feature>
<feature type="binding site" evidence="1">
    <location>
        <begin position="86"/>
        <end position="88"/>
    </location>
    <ligand>
        <name>NAD(+)</name>
        <dbReference type="ChEBI" id="CHEBI:57540"/>
    </ligand>
</feature>
<feature type="binding site" evidence="1">
    <location>
        <begin position="110"/>
        <end position="113"/>
    </location>
    <ligand>
        <name>NAD(+)</name>
        <dbReference type="ChEBI" id="CHEBI:57540"/>
    </ligand>
</feature>
<feature type="binding site" evidence="1">
    <location>
        <position position="144"/>
    </location>
    <ligand>
        <name>(S)-2,3,4,5-tetrahydrodipicolinate</name>
        <dbReference type="ChEBI" id="CHEBI:16845"/>
    </ligand>
</feature>
<feature type="binding site" evidence="1">
    <location>
        <begin position="153"/>
        <end position="154"/>
    </location>
    <ligand>
        <name>(S)-2,3,4,5-tetrahydrodipicolinate</name>
        <dbReference type="ChEBI" id="CHEBI:16845"/>
    </ligand>
</feature>
<name>DAPB_ZYMMO</name>
<proteinExistence type="inferred from homology"/>
<protein>
    <recommendedName>
        <fullName evidence="1">4-hydroxy-tetrahydrodipicolinate reductase</fullName>
        <shortName evidence="1">HTPA reductase</shortName>
        <ecNumber evidence="1">1.17.1.8</ecNumber>
    </recommendedName>
</protein>
<organism>
    <name type="scientific">Zymomonas mobilis subsp. mobilis (strain ATCC 31821 / ZM4 / CP4)</name>
    <dbReference type="NCBI Taxonomy" id="264203"/>
    <lineage>
        <taxon>Bacteria</taxon>
        <taxon>Pseudomonadati</taxon>
        <taxon>Pseudomonadota</taxon>
        <taxon>Alphaproteobacteria</taxon>
        <taxon>Sphingomonadales</taxon>
        <taxon>Zymomonadaceae</taxon>
        <taxon>Zymomonas</taxon>
    </lineage>
</organism>
<gene>
    <name evidence="1" type="primary">dapB</name>
    <name type="ordered locus">ZMO0707</name>
</gene>
<sequence>MTKESSVKIGLIGAAGRMGKAIQEAASQQDIQLSGGIGRKGAEFGSYNDSESLAKASDVLIDFSTAAALKDNIEAALHHKKPIIIGTTGLTEADHQLIEQAASKIPVILAANTSLGVNMLAALVKQAAAKLGSDWDIEIVEMHHRHKKDAPSGTALLLGRAAAEGRGEKLEDIADLQRCPATEPRETGRIGFASLRGGSVAGDHMVVFASEGERIELGHRAESRIIFARGALKAALWLADQSAGFYQMKDVLGL</sequence>
<dbReference type="EC" id="1.17.1.8" evidence="1"/>
<dbReference type="EMBL" id="AE008692">
    <property type="protein sequence ID" value="AAV89331.1"/>
    <property type="molecule type" value="Genomic_DNA"/>
</dbReference>
<dbReference type="RefSeq" id="WP_011240594.1">
    <property type="nucleotide sequence ID" value="NZ_CP035711.1"/>
</dbReference>
<dbReference type="SMR" id="Q5NPM9"/>
<dbReference type="STRING" id="264203.ZMO0707"/>
<dbReference type="GeneID" id="79904121"/>
<dbReference type="KEGG" id="zmo:ZMO0707"/>
<dbReference type="eggNOG" id="COG0289">
    <property type="taxonomic scope" value="Bacteria"/>
</dbReference>
<dbReference type="HOGENOM" id="CLU_047479_2_2_5"/>
<dbReference type="UniPathway" id="UPA00034">
    <property type="reaction ID" value="UER00018"/>
</dbReference>
<dbReference type="Proteomes" id="UP000001173">
    <property type="component" value="Chromosome"/>
</dbReference>
<dbReference type="GO" id="GO:0005737">
    <property type="term" value="C:cytoplasm"/>
    <property type="evidence" value="ECO:0007669"/>
    <property type="project" value="UniProtKB-SubCell"/>
</dbReference>
<dbReference type="GO" id="GO:0008839">
    <property type="term" value="F:4-hydroxy-tetrahydrodipicolinate reductase"/>
    <property type="evidence" value="ECO:0007669"/>
    <property type="project" value="UniProtKB-EC"/>
</dbReference>
<dbReference type="GO" id="GO:0051287">
    <property type="term" value="F:NAD binding"/>
    <property type="evidence" value="ECO:0007669"/>
    <property type="project" value="UniProtKB-UniRule"/>
</dbReference>
<dbReference type="GO" id="GO:0050661">
    <property type="term" value="F:NADP binding"/>
    <property type="evidence" value="ECO:0007669"/>
    <property type="project" value="UniProtKB-UniRule"/>
</dbReference>
<dbReference type="GO" id="GO:0016726">
    <property type="term" value="F:oxidoreductase activity, acting on CH or CH2 groups, NAD or NADP as acceptor"/>
    <property type="evidence" value="ECO:0007669"/>
    <property type="project" value="UniProtKB-UniRule"/>
</dbReference>
<dbReference type="GO" id="GO:0019877">
    <property type="term" value="P:diaminopimelate biosynthetic process"/>
    <property type="evidence" value="ECO:0007669"/>
    <property type="project" value="UniProtKB-UniRule"/>
</dbReference>
<dbReference type="GO" id="GO:0009089">
    <property type="term" value="P:lysine biosynthetic process via diaminopimelate"/>
    <property type="evidence" value="ECO:0007669"/>
    <property type="project" value="UniProtKB-UniRule"/>
</dbReference>
<dbReference type="CDD" id="cd02274">
    <property type="entry name" value="DHDPR_N"/>
    <property type="match status" value="1"/>
</dbReference>
<dbReference type="FunFam" id="3.30.360.10:FF:000004">
    <property type="entry name" value="4-hydroxy-tetrahydrodipicolinate reductase"/>
    <property type="match status" value="1"/>
</dbReference>
<dbReference type="Gene3D" id="3.30.360.10">
    <property type="entry name" value="Dihydrodipicolinate Reductase, domain 2"/>
    <property type="match status" value="1"/>
</dbReference>
<dbReference type="Gene3D" id="3.40.50.720">
    <property type="entry name" value="NAD(P)-binding Rossmann-like Domain"/>
    <property type="match status" value="1"/>
</dbReference>
<dbReference type="HAMAP" id="MF_00102">
    <property type="entry name" value="DapB"/>
    <property type="match status" value="1"/>
</dbReference>
<dbReference type="InterPro" id="IPR022663">
    <property type="entry name" value="DapB_C"/>
</dbReference>
<dbReference type="InterPro" id="IPR000846">
    <property type="entry name" value="DapB_N"/>
</dbReference>
<dbReference type="InterPro" id="IPR022664">
    <property type="entry name" value="DapB_N_CS"/>
</dbReference>
<dbReference type="InterPro" id="IPR023940">
    <property type="entry name" value="DHDPR_bac"/>
</dbReference>
<dbReference type="InterPro" id="IPR036291">
    <property type="entry name" value="NAD(P)-bd_dom_sf"/>
</dbReference>
<dbReference type="NCBIfam" id="TIGR00036">
    <property type="entry name" value="dapB"/>
    <property type="match status" value="1"/>
</dbReference>
<dbReference type="PANTHER" id="PTHR20836:SF0">
    <property type="entry name" value="4-HYDROXY-TETRAHYDRODIPICOLINATE REDUCTASE 1, CHLOROPLASTIC-RELATED"/>
    <property type="match status" value="1"/>
</dbReference>
<dbReference type="PANTHER" id="PTHR20836">
    <property type="entry name" value="DIHYDRODIPICOLINATE REDUCTASE"/>
    <property type="match status" value="1"/>
</dbReference>
<dbReference type="Pfam" id="PF05173">
    <property type="entry name" value="DapB_C"/>
    <property type="match status" value="1"/>
</dbReference>
<dbReference type="Pfam" id="PF01113">
    <property type="entry name" value="DapB_N"/>
    <property type="match status" value="1"/>
</dbReference>
<dbReference type="PIRSF" id="PIRSF000161">
    <property type="entry name" value="DHPR"/>
    <property type="match status" value="1"/>
</dbReference>
<dbReference type="SUPFAM" id="SSF55347">
    <property type="entry name" value="Glyceraldehyde-3-phosphate dehydrogenase-like, C-terminal domain"/>
    <property type="match status" value="1"/>
</dbReference>
<dbReference type="SUPFAM" id="SSF51735">
    <property type="entry name" value="NAD(P)-binding Rossmann-fold domains"/>
    <property type="match status" value="1"/>
</dbReference>
<dbReference type="PROSITE" id="PS01298">
    <property type="entry name" value="DAPB"/>
    <property type="match status" value="1"/>
</dbReference>
<accession>Q5NPM9</accession>
<reference key="1">
    <citation type="journal article" date="2005" name="Nat. Biotechnol.">
        <title>The genome sequence of the ethanologenic bacterium Zymomonas mobilis ZM4.</title>
        <authorList>
            <person name="Seo J.-S."/>
            <person name="Chong H."/>
            <person name="Park H.S."/>
            <person name="Yoon K.-O."/>
            <person name="Jung C."/>
            <person name="Kim J.J."/>
            <person name="Hong J.H."/>
            <person name="Kim H."/>
            <person name="Kim J.-H."/>
            <person name="Kil J.-I."/>
            <person name="Park C.J."/>
            <person name="Oh H.-M."/>
            <person name="Lee J.-S."/>
            <person name="Jin S.-J."/>
            <person name="Um H.-W."/>
            <person name="Lee H.-J."/>
            <person name="Oh S.-J."/>
            <person name="Kim J.Y."/>
            <person name="Kang H.L."/>
            <person name="Lee S.Y."/>
            <person name="Lee K.J."/>
            <person name="Kang H.S."/>
        </authorList>
    </citation>
    <scope>NUCLEOTIDE SEQUENCE [LARGE SCALE GENOMIC DNA]</scope>
    <source>
        <strain>ATCC 31821 / ZM4 / CP4</strain>
    </source>
</reference>
<comment type="function">
    <text evidence="1">Catalyzes the conversion of 4-hydroxy-tetrahydrodipicolinate (HTPA) to tetrahydrodipicolinate.</text>
</comment>
<comment type="catalytic activity">
    <reaction evidence="1">
        <text>(S)-2,3,4,5-tetrahydrodipicolinate + NAD(+) + H2O = (2S,4S)-4-hydroxy-2,3,4,5-tetrahydrodipicolinate + NADH + H(+)</text>
        <dbReference type="Rhea" id="RHEA:35323"/>
        <dbReference type="ChEBI" id="CHEBI:15377"/>
        <dbReference type="ChEBI" id="CHEBI:15378"/>
        <dbReference type="ChEBI" id="CHEBI:16845"/>
        <dbReference type="ChEBI" id="CHEBI:57540"/>
        <dbReference type="ChEBI" id="CHEBI:57945"/>
        <dbReference type="ChEBI" id="CHEBI:67139"/>
        <dbReference type="EC" id="1.17.1.8"/>
    </reaction>
</comment>
<comment type="catalytic activity">
    <reaction evidence="1">
        <text>(S)-2,3,4,5-tetrahydrodipicolinate + NADP(+) + H2O = (2S,4S)-4-hydroxy-2,3,4,5-tetrahydrodipicolinate + NADPH + H(+)</text>
        <dbReference type="Rhea" id="RHEA:35331"/>
        <dbReference type="ChEBI" id="CHEBI:15377"/>
        <dbReference type="ChEBI" id="CHEBI:15378"/>
        <dbReference type="ChEBI" id="CHEBI:16845"/>
        <dbReference type="ChEBI" id="CHEBI:57783"/>
        <dbReference type="ChEBI" id="CHEBI:58349"/>
        <dbReference type="ChEBI" id="CHEBI:67139"/>
        <dbReference type="EC" id="1.17.1.8"/>
    </reaction>
</comment>
<comment type="pathway">
    <text evidence="1">Amino-acid biosynthesis; L-lysine biosynthesis via DAP pathway; (S)-tetrahydrodipicolinate from L-aspartate: step 4/4.</text>
</comment>
<comment type="subcellular location">
    <subcellularLocation>
        <location evidence="1">Cytoplasm</location>
    </subcellularLocation>
</comment>
<comment type="similarity">
    <text evidence="1">Belongs to the DapB family.</text>
</comment>
<comment type="caution">
    <text evidence="2">Was originally thought to be a dihydrodipicolinate reductase (DHDPR), catalyzing the conversion of dihydrodipicolinate to tetrahydrodipicolinate. However, it was shown in E.coli that the substrate of the enzymatic reaction is not dihydrodipicolinate (DHDP) but in fact (2S,4S)-4-hydroxy-2,3,4,5-tetrahydrodipicolinic acid (HTPA), the product released by the DapA-catalyzed reaction.</text>
</comment>